<dbReference type="EMBL" id="AE004092">
    <property type="protein sequence ID" value="AAK33347.1"/>
    <property type="molecule type" value="Genomic_DNA"/>
</dbReference>
<dbReference type="EMBL" id="CP000017">
    <property type="protein sequence ID" value="AAZ50851.1"/>
    <property type="molecule type" value="Genomic_DNA"/>
</dbReference>
<dbReference type="RefSeq" id="NP_268626.1">
    <property type="nucleotide sequence ID" value="NC_002737.2"/>
</dbReference>
<dbReference type="SMR" id="P69946"/>
<dbReference type="PaxDb" id="1314-HKU360_00272"/>
<dbReference type="KEGG" id="spy:SPy_0273"/>
<dbReference type="KEGG" id="spz:M5005_Spy0232"/>
<dbReference type="PATRIC" id="fig|160490.10.peg.240"/>
<dbReference type="HOGENOM" id="CLU_002794_4_1_9"/>
<dbReference type="OMA" id="GQFAKVQ"/>
<dbReference type="Proteomes" id="UP000000750">
    <property type="component" value="Chromosome"/>
</dbReference>
<dbReference type="GO" id="GO:0005737">
    <property type="term" value="C:cytoplasm"/>
    <property type="evidence" value="ECO:0007669"/>
    <property type="project" value="UniProtKB-SubCell"/>
</dbReference>
<dbReference type="GO" id="GO:0005525">
    <property type="term" value="F:GTP binding"/>
    <property type="evidence" value="ECO:0007669"/>
    <property type="project" value="UniProtKB-UniRule"/>
</dbReference>
<dbReference type="GO" id="GO:0003924">
    <property type="term" value="F:GTPase activity"/>
    <property type="evidence" value="ECO:0007669"/>
    <property type="project" value="InterPro"/>
</dbReference>
<dbReference type="GO" id="GO:0003746">
    <property type="term" value="F:translation elongation factor activity"/>
    <property type="evidence" value="ECO:0007669"/>
    <property type="project" value="UniProtKB-UniRule"/>
</dbReference>
<dbReference type="GO" id="GO:0032790">
    <property type="term" value="P:ribosome disassembly"/>
    <property type="evidence" value="ECO:0007669"/>
    <property type="project" value="TreeGrafter"/>
</dbReference>
<dbReference type="CDD" id="cd01886">
    <property type="entry name" value="EF-G"/>
    <property type="match status" value="1"/>
</dbReference>
<dbReference type="CDD" id="cd16262">
    <property type="entry name" value="EFG_III"/>
    <property type="match status" value="1"/>
</dbReference>
<dbReference type="CDD" id="cd01434">
    <property type="entry name" value="EFG_mtEFG1_IV"/>
    <property type="match status" value="1"/>
</dbReference>
<dbReference type="CDD" id="cd03713">
    <property type="entry name" value="EFG_mtEFG_C"/>
    <property type="match status" value="1"/>
</dbReference>
<dbReference type="CDD" id="cd04088">
    <property type="entry name" value="EFG_mtEFG_II"/>
    <property type="match status" value="1"/>
</dbReference>
<dbReference type="FunFam" id="2.40.30.10:FF:000006">
    <property type="entry name" value="Elongation factor G"/>
    <property type="match status" value="1"/>
</dbReference>
<dbReference type="FunFam" id="3.30.230.10:FF:000003">
    <property type="entry name" value="Elongation factor G"/>
    <property type="match status" value="1"/>
</dbReference>
<dbReference type="FunFam" id="3.30.70.240:FF:000001">
    <property type="entry name" value="Elongation factor G"/>
    <property type="match status" value="1"/>
</dbReference>
<dbReference type="FunFam" id="3.30.70.870:FF:000001">
    <property type="entry name" value="Elongation factor G"/>
    <property type="match status" value="1"/>
</dbReference>
<dbReference type="FunFam" id="3.40.50.300:FF:000029">
    <property type="entry name" value="Elongation factor G"/>
    <property type="match status" value="1"/>
</dbReference>
<dbReference type="Gene3D" id="3.30.230.10">
    <property type="match status" value="1"/>
</dbReference>
<dbReference type="Gene3D" id="3.30.70.240">
    <property type="match status" value="1"/>
</dbReference>
<dbReference type="Gene3D" id="3.30.70.870">
    <property type="entry name" value="Elongation Factor G (Translational Gtpase), domain 3"/>
    <property type="match status" value="1"/>
</dbReference>
<dbReference type="Gene3D" id="3.40.50.300">
    <property type="entry name" value="P-loop containing nucleotide triphosphate hydrolases"/>
    <property type="match status" value="1"/>
</dbReference>
<dbReference type="Gene3D" id="2.40.30.10">
    <property type="entry name" value="Translation factors"/>
    <property type="match status" value="1"/>
</dbReference>
<dbReference type="HAMAP" id="MF_00054_B">
    <property type="entry name" value="EF_G_EF_2_B"/>
    <property type="match status" value="1"/>
</dbReference>
<dbReference type="InterPro" id="IPR041095">
    <property type="entry name" value="EFG_II"/>
</dbReference>
<dbReference type="InterPro" id="IPR009022">
    <property type="entry name" value="EFG_III"/>
</dbReference>
<dbReference type="InterPro" id="IPR035647">
    <property type="entry name" value="EFG_III/V"/>
</dbReference>
<dbReference type="InterPro" id="IPR047872">
    <property type="entry name" value="EFG_IV"/>
</dbReference>
<dbReference type="InterPro" id="IPR035649">
    <property type="entry name" value="EFG_V"/>
</dbReference>
<dbReference type="InterPro" id="IPR000640">
    <property type="entry name" value="EFG_V-like"/>
</dbReference>
<dbReference type="InterPro" id="IPR004161">
    <property type="entry name" value="EFTu-like_2"/>
</dbReference>
<dbReference type="InterPro" id="IPR031157">
    <property type="entry name" value="G_TR_CS"/>
</dbReference>
<dbReference type="InterPro" id="IPR027417">
    <property type="entry name" value="P-loop_NTPase"/>
</dbReference>
<dbReference type="InterPro" id="IPR020568">
    <property type="entry name" value="Ribosomal_Su5_D2-typ_SF"/>
</dbReference>
<dbReference type="InterPro" id="IPR014721">
    <property type="entry name" value="Ribsml_uS5_D2-typ_fold_subgr"/>
</dbReference>
<dbReference type="InterPro" id="IPR005225">
    <property type="entry name" value="Small_GTP-bd"/>
</dbReference>
<dbReference type="InterPro" id="IPR000795">
    <property type="entry name" value="T_Tr_GTP-bd_dom"/>
</dbReference>
<dbReference type="InterPro" id="IPR009000">
    <property type="entry name" value="Transl_B-barrel_sf"/>
</dbReference>
<dbReference type="InterPro" id="IPR004540">
    <property type="entry name" value="Transl_elong_EFG/EF2"/>
</dbReference>
<dbReference type="InterPro" id="IPR005517">
    <property type="entry name" value="Transl_elong_EFG/EF2_IV"/>
</dbReference>
<dbReference type="NCBIfam" id="TIGR00484">
    <property type="entry name" value="EF-G"/>
    <property type="match status" value="1"/>
</dbReference>
<dbReference type="NCBIfam" id="NF009379">
    <property type="entry name" value="PRK12740.1-3"/>
    <property type="match status" value="1"/>
</dbReference>
<dbReference type="NCBIfam" id="NF009381">
    <property type="entry name" value="PRK12740.1-5"/>
    <property type="match status" value="1"/>
</dbReference>
<dbReference type="NCBIfam" id="TIGR00231">
    <property type="entry name" value="small_GTP"/>
    <property type="match status" value="1"/>
</dbReference>
<dbReference type="PANTHER" id="PTHR43261:SF1">
    <property type="entry name" value="RIBOSOME-RELEASING FACTOR 2, MITOCHONDRIAL"/>
    <property type="match status" value="1"/>
</dbReference>
<dbReference type="PANTHER" id="PTHR43261">
    <property type="entry name" value="TRANSLATION ELONGATION FACTOR G-RELATED"/>
    <property type="match status" value="1"/>
</dbReference>
<dbReference type="Pfam" id="PF00679">
    <property type="entry name" value="EFG_C"/>
    <property type="match status" value="1"/>
</dbReference>
<dbReference type="Pfam" id="PF14492">
    <property type="entry name" value="EFG_III"/>
    <property type="match status" value="1"/>
</dbReference>
<dbReference type="Pfam" id="PF03764">
    <property type="entry name" value="EFG_IV"/>
    <property type="match status" value="1"/>
</dbReference>
<dbReference type="Pfam" id="PF00009">
    <property type="entry name" value="GTP_EFTU"/>
    <property type="match status" value="1"/>
</dbReference>
<dbReference type="Pfam" id="PF03144">
    <property type="entry name" value="GTP_EFTU_D2"/>
    <property type="match status" value="1"/>
</dbReference>
<dbReference type="PRINTS" id="PR00315">
    <property type="entry name" value="ELONGATNFCT"/>
</dbReference>
<dbReference type="SMART" id="SM00838">
    <property type="entry name" value="EFG_C"/>
    <property type="match status" value="1"/>
</dbReference>
<dbReference type="SMART" id="SM00889">
    <property type="entry name" value="EFG_IV"/>
    <property type="match status" value="1"/>
</dbReference>
<dbReference type="SUPFAM" id="SSF54980">
    <property type="entry name" value="EF-G C-terminal domain-like"/>
    <property type="match status" value="2"/>
</dbReference>
<dbReference type="SUPFAM" id="SSF52540">
    <property type="entry name" value="P-loop containing nucleoside triphosphate hydrolases"/>
    <property type="match status" value="1"/>
</dbReference>
<dbReference type="SUPFAM" id="SSF54211">
    <property type="entry name" value="Ribosomal protein S5 domain 2-like"/>
    <property type="match status" value="1"/>
</dbReference>
<dbReference type="SUPFAM" id="SSF50447">
    <property type="entry name" value="Translation proteins"/>
    <property type="match status" value="1"/>
</dbReference>
<dbReference type="PROSITE" id="PS00301">
    <property type="entry name" value="G_TR_1"/>
    <property type="match status" value="1"/>
</dbReference>
<dbReference type="PROSITE" id="PS51722">
    <property type="entry name" value="G_TR_2"/>
    <property type="match status" value="1"/>
</dbReference>
<gene>
    <name type="primary">fus</name>
    <name type="ordered locus">SPy_0273</name>
    <name type="ordered locus">M5005_Spy0232</name>
</gene>
<organism>
    <name type="scientific">Streptococcus pyogenes serotype M1</name>
    <dbReference type="NCBI Taxonomy" id="301447"/>
    <lineage>
        <taxon>Bacteria</taxon>
        <taxon>Bacillati</taxon>
        <taxon>Bacillota</taxon>
        <taxon>Bacilli</taxon>
        <taxon>Lactobacillales</taxon>
        <taxon>Streptococcaceae</taxon>
        <taxon>Streptococcus</taxon>
    </lineage>
</organism>
<sequence>MAREFSLAKTRNIGIMAHVDAGKTTTTERILYYTGKIHKIGETHEGASQMDWMEQEQERGITITSAATTAQWDGHRVNIIDTPGHVDFTIEVQRSLRVLDGAVTVLDSQSGVEPQTETVWRQATEYGVPRIVFANKMDKIGADFLYSVQTLHDRLQANAHPIQLPIGAEDDFRGIIDLIKMKAEIYTNDLGTDILEEDIPEEYLEQAQEYREKLIEAVAETDEDLMMKYLEGEEITNDELIAGIRKATINVEFFPVLCGSAFKNKGVQLMLDAVIAYLPSPLDIPAIKGVNPDTDAEEERPASDEEPFAALAFKIMTDPFVGRLTFFRVYSGVLNSGSYVMNTSKGKRERIGRILQMHANSRQEIETVYAGDIAAAVGLKDTTTGDSLTDEKAKVILESIEVPEPVIQLMVEPKSKADQDKMGVALQKLAEEDPTFRVETNVETGETVIAGMGELHLDVLVDRMKREFKVEANVGAPQVSYRETFRASTQARGFFKRQSGGKGQFGDVWIEFTPNEEGKGFEFENAIVGGVVPREFIPAVEKGLIESMANGVLAGYPMVDVKAKLYDGSYHDVDSSETAFKIAASLALKEAAKSAQPAILEPMMLVTITAPEDNLGDVMGHVTARRGRVDGMEAHGNSQIVRAYVPLAEMFGYATVLRSATQGRGTFMMVFDHYEDVPKSVQEEIIKKNKGE</sequence>
<proteinExistence type="inferred from homology"/>
<accession>P69946</accession>
<accession>P82477</accession>
<accession>Q490W7</accession>
<name>EFG_STRP1</name>
<reference key="1">
    <citation type="journal article" date="2001" name="Proc. Natl. Acad. Sci. U.S.A.">
        <title>Complete genome sequence of an M1 strain of Streptococcus pyogenes.</title>
        <authorList>
            <person name="Ferretti J.J."/>
            <person name="McShan W.M."/>
            <person name="Ajdic D.J."/>
            <person name="Savic D.J."/>
            <person name="Savic G."/>
            <person name="Lyon K."/>
            <person name="Primeaux C."/>
            <person name="Sezate S."/>
            <person name="Suvorov A.N."/>
            <person name="Kenton S."/>
            <person name="Lai H.S."/>
            <person name="Lin S.P."/>
            <person name="Qian Y."/>
            <person name="Jia H.G."/>
            <person name="Najar F.Z."/>
            <person name="Ren Q."/>
            <person name="Zhu H."/>
            <person name="Song L."/>
            <person name="White J."/>
            <person name="Yuan X."/>
            <person name="Clifton S.W."/>
            <person name="Roe B.A."/>
            <person name="McLaughlin R.E."/>
        </authorList>
    </citation>
    <scope>NUCLEOTIDE SEQUENCE [LARGE SCALE GENOMIC DNA]</scope>
    <source>
        <strain>ATCC 700294 / SF370 / Serotype M1</strain>
    </source>
</reference>
<reference key="2">
    <citation type="journal article" date="2005" name="J. Infect. Dis.">
        <title>Evolutionary origin and emergence of a highly successful clone of serotype M1 group A Streptococcus involved multiple horizontal gene transfer events.</title>
        <authorList>
            <person name="Sumby P."/>
            <person name="Porcella S.F."/>
            <person name="Madrigal A.G."/>
            <person name="Barbian K.D."/>
            <person name="Virtaneva K."/>
            <person name="Ricklefs S.M."/>
            <person name="Sturdevant D.E."/>
            <person name="Graham M.R."/>
            <person name="Vuopio-Varkila J."/>
            <person name="Hoe N.P."/>
            <person name="Musser J.M."/>
        </authorList>
    </citation>
    <scope>NUCLEOTIDE SEQUENCE [LARGE SCALE GENOMIC DNA]</scope>
    <source>
        <strain>ATCC BAA-947 / MGAS5005 / Serotype M1</strain>
    </source>
</reference>
<comment type="function">
    <text evidence="1">Catalyzes the GTP-dependent ribosomal translocation step during translation elongation. During this step, the ribosome changes from the pre-translocational (PRE) to the post-translocational (POST) state as the newly formed A-site-bound peptidyl-tRNA and P-site-bound deacylated tRNA move to the P and E sites, respectively. Catalyzes the coordinated movement of the two tRNA molecules, the mRNA and conformational changes in the ribosome (By similarity).</text>
</comment>
<comment type="subcellular location">
    <subcellularLocation>
        <location>Cytoplasm</location>
    </subcellularLocation>
</comment>
<comment type="similarity">
    <text evidence="2">Belongs to the TRAFAC class translation factor GTPase superfamily. Classic translation factor GTPase family. EF-G/EF-2 subfamily.</text>
</comment>
<keyword id="KW-0963">Cytoplasm</keyword>
<keyword id="KW-0251">Elongation factor</keyword>
<keyword id="KW-0342">GTP-binding</keyword>
<keyword id="KW-0547">Nucleotide-binding</keyword>
<keyword id="KW-0648">Protein biosynthesis</keyword>
<keyword id="KW-1185">Reference proteome</keyword>
<protein>
    <recommendedName>
        <fullName>Elongation factor G</fullName>
        <shortName>EF-G</shortName>
    </recommendedName>
</protein>
<evidence type="ECO:0000250" key="1"/>
<evidence type="ECO:0000305" key="2"/>
<feature type="initiator methionine" description="Removed" evidence="1">
    <location>
        <position position="1"/>
    </location>
</feature>
<feature type="chain" id="PRO_0000091232" description="Elongation factor G">
    <location>
        <begin position="2"/>
        <end position="692"/>
    </location>
</feature>
<feature type="domain" description="tr-type G">
    <location>
        <begin position="8"/>
        <end position="282"/>
    </location>
</feature>
<feature type="binding site" evidence="1">
    <location>
        <begin position="17"/>
        <end position="24"/>
    </location>
    <ligand>
        <name>GTP</name>
        <dbReference type="ChEBI" id="CHEBI:37565"/>
    </ligand>
</feature>
<feature type="binding site" evidence="1">
    <location>
        <begin position="81"/>
        <end position="85"/>
    </location>
    <ligand>
        <name>GTP</name>
        <dbReference type="ChEBI" id="CHEBI:37565"/>
    </ligand>
</feature>
<feature type="binding site" evidence="1">
    <location>
        <begin position="135"/>
        <end position="138"/>
    </location>
    <ligand>
        <name>GTP</name>
        <dbReference type="ChEBI" id="CHEBI:37565"/>
    </ligand>
</feature>